<reference key="1">
    <citation type="submission" date="2009-01" db="EMBL/GenBank/DDBJ databases">
        <title>Complete sequence of chromosome of Methylobacterium nodulans ORS 2060.</title>
        <authorList>
            <consortium name="US DOE Joint Genome Institute"/>
            <person name="Lucas S."/>
            <person name="Copeland A."/>
            <person name="Lapidus A."/>
            <person name="Glavina del Rio T."/>
            <person name="Dalin E."/>
            <person name="Tice H."/>
            <person name="Bruce D."/>
            <person name="Goodwin L."/>
            <person name="Pitluck S."/>
            <person name="Sims D."/>
            <person name="Brettin T."/>
            <person name="Detter J.C."/>
            <person name="Han C."/>
            <person name="Larimer F."/>
            <person name="Land M."/>
            <person name="Hauser L."/>
            <person name="Kyrpides N."/>
            <person name="Ivanova N."/>
            <person name="Marx C.J."/>
            <person name="Richardson P."/>
        </authorList>
    </citation>
    <scope>NUCLEOTIDE SEQUENCE [LARGE SCALE GENOMIC DNA]</scope>
    <source>
        <strain>LMG 21967 / CNCM I-2342 / ORS 2060</strain>
    </source>
</reference>
<proteinExistence type="inferred from homology"/>
<organism>
    <name type="scientific">Methylobacterium nodulans (strain LMG 21967 / CNCM I-2342 / ORS 2060)</name>
    <dbReference type="NCBI Taxonomy" id="460265"/>
    <lineage>
        <taxon>Bacteria</taxon>
        <taxon>Pseudomonadati</taxon>
        <taxon>Pseudomonadota</taxon>
        <taxon>Alphaproteobacteria</taxon>
        <taxon>Hyphomicrobiales</taxon>
        <taxon>Methylobacteriaceae</taxon>
        <taxon>Methylobacterium</taxon>
    </lineage>
</organism>
<protein>
    <recommendedName>
        <fullName evidence="1">Large ribosomal subunit protein uL23</fullName>
    </recommendedName>
    <alternativeName>
        <fullName evidence="2">50S ribosomal protein L23</fullName>
    </alternativeName>
</protein>
<gene>
    <name evidence="1" type="primary">rplW</name>
    <name type="ordered locus">Mnod_1910</name>
</gene>
<sequence length="98" mass="10852">MSADPRHYDVIVAPVITEKATNLSELNKVVFRVAPKATKPQIKEAVEKLFEVKVKSVNTLVTKGKTKMFRGQRGQRSDVKKAIVTLEEGQTIDVTTGL</sequence>
<feature type="chain" id="PRO_1000184093" description="Large ribosomal subunit protein uL23">
    <location>
        <begin position="1"/>
        <end position="98"/>
    </location>
</feature>
<comment type="function">
    <text evidence="1">One of the early assembly proteins it binds 23S rRNA. One of the proteins that surrounds the polypeptide exit tunnel on the outside of the ribosome. Forms the main docking site for trigger factor binding to the ribosome.</text>
</comment>
<comment type="subunit">
    <text evidence="1">Part of the 50S ribosomal subunit. Contacts protein L29, and trigger factor when it is bound to the ribosome.</text>
</comment>
<comment type="similarity">
    <text evidence="1">Belongs to the universal ribosomal protein uL23 family.</text>
</comment>
<keyword id="KW-1185">Reference proteome</keyword>
<keyword id="KW-0687">Ribonucleoprotein</keyword>
<keyword id="KW-0689">Ribosomal protein</keyword>
<keyword id="KW-0694">RNA-binding</keyword>
<keyword id="KW-0699">rRNA-binding</keyword>
<accession>B8IS87</accession>
<name>RL23_METNO</name>
<dbReference type="EMBL" id="CP001349">
    <property type="protein sequence ID" value="ACL56899.1"/>
    <property type="molecule type" value="Genomic_DNA"/>
</dbReference>
<dbReference type="RefSeq" id="WP_015928588.1">
    <property type="nucleotide sequence ID" value="NC_011894.1"/>
</dbReference>
<dbReference type="SMR" id="B8IS87"/>
<dbReference type="STRING" id="460265.Mnod_1910"/>
<dbReference type="KEGG" id="mno:Mnod_1910"/>
<dbReference type="eggNOG" id="COG0089">
    <property type="taxonomic scope" value="Bacteria"/>
</dbReference>
<dbReference type="HOGENOM" id="CLU_037562_3_1_5"/>
<dbReference type="OrthoDB" id="9793353at2"/>
<dbReference type="Proteomes" id="UP000008207">
    <property type="component" value="Chromosome"/>
</dbReference>
<dbReference type="GO" id="GO:1990904">
    <property type="term" value="C:ribonucleoprotein complex"/>
    <property type="evidence" value="ECO:0007669"/>
    <property type="project" value="UniProtKB-KW"/>
</dbReference>
<dbReference type="GO" id="GO:0005840">
    <property type="term" value="C:ribosome"/>
    <property type="evidence" value="ECO:0007669"/>
    <property type="project" value="UniProtKB-KW"/>
</dbReference>
<dbReference type="GO" id="GO:0019843">
    <property type="term" value="F:rRNA binding"/>
    <property type="evidence" value="ECO:0007669"/>
    <property type="project" value="UniProtKB-UniRule"/>
</dbReference>
<dbReference type="GO" id="GO:0003735">
    <property type="term" value="F:structural constituent of ribosome"/>
    <property type="evidence" value="ECO:0007669"/>
    <property type="project" value="InterPro"/>
</dbReference>
<dbReference type="GO" id="GO:0006412">
    <property type="term" value="P:translation"/>
    <property type="evidence" value="ECO:0007669"/>
    <property type="project" value="UniProtKB-UniRule"/>
</dbReference>
<dbReference type="FunFam" id="3.30.70.330:FF:000001">
    <property type="entry name" value="50S ribosomal protein L23"/>
    <property type="match status" value="1"/>
</dbReference>
<dbReference type="Gene3D" id="3.30.70.330">
    <property type="match status" value="1"/>
</dbReference>
<dbReference type="HAMAP" id="MF_01369_B">
    <property type="entry name" value="Ribosomal_uL23_B"/>
    <property type="match status" value="1"/>
</dbReference>
<dbReference type="InterPro" id="IPR012677">
    <property type="entry name" value="Nucleotide-bd_a/b_plait_sf"/>
</dbReference>
<dbReference type="InterPro" id="IPR013025">
    <property type="entry name" value="Ribosomal_uL23-like"/>
</dbReference>
<dbReference type="InterPro" id="IPR012678">
    <property type="entry name" value="Ribosomal_uL23/eL15/eS24_sf"/>
</dbReference>
<dbReference type="InterPro" id="IPR001014">
    <property type="entry name" value="Ribosomal_uL23_CS"/>
</dbReference>
<dbReference type="NCBIfam" id="NF004359">
    <property type="entry name" value="PRK05738.1-3"/>
    <property type="match status" value="1"/>
</dbReference>
<dbReference type="NCBIfam" id="NF004360">
    <property type="entry name" value="PRK05738.1-5"/>
    <property type="match status" value="1"/>
</dbReference>
<dbReference type="NCBIfam" id="NF004363">
    <property type="entry name" value="PRK05738.2-4"/>
    <property type="match status" value="1"/>
</dbReference>
<dbReference type="PANTHER" id="PTHR11620">
    <property type="entry name" value="60S RIBOSOMAL PROTEIN L23A"/>
    <property type="match status" value="1"/>
</dbReference>
<dbReference type="Pfam" id="PF00276">
    <property type="entry name" value="Ribosomal_L23"/>
    <property type="match status" value="1"/>
</dbReference>
<dbReference type="SUPFAM" id="SSF54189">
    <property type="entry name" value="Ribosomal proteins S24e, L23 and L15e"/>
    <property type="match status" value="1"/>
</dbReference>
<dbReference type="PROSITE" id="PS00050">
    <property type="entry name" value="RIBOSOMAL_L23"/>
    <property type="match status" value="1"/>
</dbReference>
<evidence type="ECO:0000255" key="1">
    <source>
        <dbReference type="HAMAP-Rule" id="MF_01369"/>
    </source>
</evidence>
<evidence type="ECO:0000305" key="2"/>